<keyword id="KW-0413">Isomerase</keyword>
<keyword id="KW-1185">Reference proteome</keyword>
<keyword id="KW-0697">Rotamase</keyword>
<proteinExistence type="inferred from homology"/>
<gene>
    <name type="primary">PIN4</name>
    <name type="ORF">FGRRES_16807</name>
    <name type="ORF">FGSG_13112</name>
</gene>
<feature type="chain" id="PRO_0000232934" description="Peptidyl-prolyl cis-trans isomerase PIN4">
    <location>
        <begin position="1"/>
        <end position="133"/>
    </location>
</feature>
<feature type="domain" description="PpiC" evidence="2">
    <location>
        <begin position="39"/>
        <end position="131"/>
    </location>
</feature>
<feature type="region of interest" description="Disordered" evidence="3">
    <location>
        <begin position="1"/>
        <end position="42"/>
    </location>
</feature>
<feature type="compositionally biased region" description="Basic and acidic residues" evidence="3">
    <location>
        <begin position="1"/>
        <end position="29"/>
    </location>
</feature>
<protein>
    <recommendedName>
        <fullName>Peptidyl-prolyl cis-trans isomerase PIN4</fullName>
        <shortName>PPIase PIN4</shortName>
        <ecNumber>5.2.1.8</ecNumber>
    </recommendedName>
    <alternativeName>
        <fullName>Parvulin-14</fullName>
        <shortName>Par14</shortName>
    </alternativeName>
</protein>
<evidence type="ECO:0000250" key="1"/>
<evidence type="ECO:0000255" key="2">
    <source>
        <dbReference type="PROSITE-ProRule" id="PRU00278"/>
    </source>
</evidence>
<evidence type="ECO:0000256" key="3">
    <source>
        <dbReference type="SAM" id="MobiDB-lite"/>
    </source>
</evidence>
<evidence type="ECO:0000305" key="4"/>
<reference key="1">
    <citation type="journal article" date="2007" name="Science">
        <title>The Fusarium graminearum genome reveals a link between localized polymorphism and pathogen specialization.</title>
        <authorList>
            <person name="Cuomo C.A."/>
            <person name="Gueldener U."/>
            <person name="Xu J.-R."/>
            <person name="Trail F."/>
            <person name="Turgeon B.G."/>
            <person name="Di Pietro A."/>
            <person name="Walton J.D."/>
            <person name="Ma L.-J."/>
            <person name="Baker S.E."/>
            <person name="Rep M."/>
            <person name="Adam G."/>
            <person name="Antoniw J."/>
            <person name="Baldwin T."/>
            <person name="Calvo S.E."/>
            <person name="Chang Y.-L."/>
            <person name="DeCaprio D."/>
            <person name="Gale L.R."/>
            <person name="Gnerre S."/>
            <person name="Goswami R.S."/>
            <person name="Hammond-Kosack K."/>
            <person name="Harris L.J."/>
            <person name="Hilburn K."/>
            <person name="Kennell J.C."/>
            <person name="Kroken S."/>
            <person name="Magnuson J.K."/>
            <person name="Mannhaupt G."/>
            <person name="Mauceli E.W."/>
            <person name="Mewes H.-W."/>
            <person name="Mitterbauer R."/>
            <person name="Muehlbauer G."/>
            <person name="Muensterkoetter M."/>
            <person name="Nelson D."/>
            <person name="O'Donnell K."/>
            <person name="Ouellet T."/>
            <person name="Qi W."/>
            <person name="Quesneville H."/>
            <person name="Roncero M.I.G."/>
            <person name="Seong K.-Y."/>
            <person name="Tetko I.V."/>
            <person name="Urban M."/>
            <person name="Waalwijk C."/>
            <person name="Ward T.J."/>
            <person name="Yao J."/>
            <person name="Birren B.W."/>
            <person name="Kistler H.C."/>
        </authorList>
    </citation>
    <scope>NUCLEOTIDE SEQUENCE [LARGE SCALE GENOMIC DNA]</scope>
    <source>
        <strain>ATCC MYA-4620 / CBS 123657 / FGSC 9075 / NRRL 31084 / PH-1</strain>
    </source>
</reference>
<reference key="2">
    <citation type="journal article" date="2010" name="Nature">
        <title>Comparative genomics reveals mobile pathogenicity chromosomes in Fusarium.</title>
        <authorList>
            <person name="Ma L.-J."/>
            <person name="van der Does H.C."/>
            <person name="Borkovich K.A."/>
            <person name="Coleman J.J."/>
            <person name="Daboussi M.-J."/>
            <person name="Di Pietro A."/>
            <person name="Dufresne M."/>
            <person name="Freitag M."/>
            <person name="Grabherr M."/>
            <person name="Henrissat B."/>
            <person name="Houterman P.M."/>
            <person name="Kang S."/>
            <person name="Shim W.-B."/>
            <person name="Woloshuk C."/>
            <person name="Xie X."/>
            <person name="Xu J.-R."/>
            <person name="Antoniw J."/>
            <person name="Baker S.E."/>
            <person name="Bluhm B.H."/>
            <person name="Breakspear A."/>
            <person name="Brown D.W."/>
            <person name="Butchko R.A.E."/>
            <person name="Chapman S."/>
            <person name="Coulson R."/>
            <person name="Coutinho P.M."/>
            <person name="Danchin E.G.J."/>
            <person name="Diener A."/>
            <person name="Gale L.R."/>
            <person name="Gardiner D.M."/>
            <person name="Goff S."/>
            <person name="Hammond-Kosack K.E."/>
            <person name="Hilburn K."/>
            <person name="Hua-Van A."/>
            <person name="Jonkers W."/>
            <person name="Kazan K."/>
            <person name="Kodira C.D."/>
            <person name="Koehrsen M."/>
            <person name="Kumar L."/>
            <person name="Lee Y.-H."/>
            <person name="Li L."/>
            <person name="Manners J.M."/>
            <person name="Miranda-Saavedra D."/>
            <person name="Mukherjee M."/>
            <person name="Park G."/>
            <person name="Park J."/>
            <person name="Park S.-Y."/>
            <person name="Proctor R.H."/>
            <person name="Regev A."/>
            <person name="Ruiz-Roldan M.C."/>
            <person name="Sain D."/>
            <person name="Sakthikumar S."/>
            <person name="Sykes S."/>
            <person name="Schwartz D.C."/>
            <person name="Turgeon B.G."/>
            <person name="Wapinski I."/>
            <person name="Yoder O."/>
            <person name="Young S."/>
            <person name="Zeng Q."/>
            <person name="Zhou S."/>
            <person name="Galagan J."/>
            <person name="Cuomo C.A."/>
            <person name="Kistler H.C."/>
            <person name="Rep M."/>
        </authorList>
    </citation>
    <scope>GENOME REANNOTATION</scope>
    <source>
        <strain>ATCC MYA-4620 / CBS 123657 / FGSC 9075 / NRRL 31084 / PH-1</strain>
    </source>
</reference>
<reference key="3">
    <citation type="journal article" date="2006" name="BMC Genomics">
        <title>Identification and comparative analysis of sixteen fungal peptidyl-prolyl cis/trans isomerase repertoires.</title>
        <authorList>
            <person name="Pemberton T.J."/>
        </authorList>
    </citation>
    <scope>REVISION OF GENE MODEL</scope>
</reference>
<reference key="4">
    <citation type="journal article" date="2015" name="BMC Genomics">
        <title>The completed genome sequence of the pathogenic ascomycete fungus Fusarium graminearum.</title>
        <authorList>
            <person name="King R."/>
            <person name="Urban M."/>
            <person name="Hammond-Kosack M.C.U."/>
            <person name="Hassani-Pak K."/>
            <person name="Hammond-Kosack K.E."/>
        </authorList>
    </citation>
    <scope>NUCLEOTIDE SEQUENCE [LARGE SCALE GENOMIC DNA]</scope>
    <source>
        <strain>ATCC MYA-4620 / CBS 123657 / FGSC 9075 / NRRL 31084 / PH-1</strain>
    </source>
</reference>
<accession>Q4I665</accession>
<accession>A0A0E0SEN8</accession>
<accession>I1S8D4</accession>
<name>PIN4_GIBZE</name>
<sequence>MGKNDKKGADKGGKAKGGDKGKDAKDTKDSGSGGKAKGAQSINVRHILCEKHAKKEEALAKLNDGVKFDEVAREYSEDKARQGGSLGWKTKGSLDPKFEEVAFALETSTTNSPKFVEVKTGFGYHIIMVEGRK</sequence>
<dbReference type="EC" id="5.2.1.8"/>
<dbReference type="EMBL" id="DS231666">
    <property type="protein sequence ID" value="ESU13529.1"/>
    <property type="status" value="ALT_SEQ"/>
    <property type="molecule type" value="Genomic_DNA"/>
</dbReference>
<dbReference type="EMBL" id="HG970335">
    <property type="protein sequence ID" value="CEF84901.1"/>
    <property type="molecule type" value="Genomic_DNA"/>
</dbReference>
<dbReference type="RefSeq" id="XP_011327036.1">
    <property type="nucleotide sequence ID" value="XM_011328734.1"/>
</dbReference>
<dbReference type="SMR" id="Q4I665"/>
<dbReference type="STRING" id="229533.Q4I665"/>
<dbReference type="GeneID" id="23559919"/>
<dbReference type="KEGG" id="fgr:FGSG_13112"/>
<dbReference type="VEuPathDB" id="FungiDB:FGRAMPH1_01G24445"/>
<dbReference type="HOGENOM" id="CLU_3125195_0_0_1"/>
<dbReference type="InParanoid" id="Q4I665"/>
<dbReference type="Proteomes" id="UP000070720">
    <property type="component" value="Chromosome 4"/>
</dbReference>
<dbReference type="GO" id="GO:0003677">
    <property type="term" value="F:DNA binding"/>
    <property type="evidence" value="ECO:0007669"/>
    <property type="project" value="InterPro"/>
</dbReference>
<dbReference type="GO" id="GO:0003755">
    <property type="term" value="F:peptidyl-prolyl cis-trans isomerase activity"/>
    <property type="evidence" value="ECO:0007669"/>
    <property type="project" value="UniProtKB-KW"/>
</dbReference>
<dbReference type="GO" id="GO:0006364">
    <property type="term" value="P:rRNA processing"/>
    <property type="evidence" value="ECO:0007669"/>
    <property type="project" value="InterPro"/>
</dbReference>
<dbReference type="Gene3D" id="3.10.50.40">
    <property type="match status" value="1"/>
</dbReference>
<dbReference type="InterPro" id="IPR043323">
    <property type="entry name" value="PIN4"/>
</dbReference>
<dbReference type="InterPro" id="IPR046357">
    <property type="entry name" value="PPIase_dom_sf"/>
</dbReference>
<dbReference type="InterPro" id="IPR000297">
    <property type="entry name" value="PPIase_PpiC"/>
</dbReference>
<dbReference type="PANTHER" id="PTHR45995">
    <property type="match status" value="1"/>
</dbReference>
<dbReference type="Pfam" id="PF13616">
    <property type="entry name" value="Rotamase_3"/>
    <property type="match status" value="1"/>
</dbReference>
<dbReference type="SUPFAM" id="SSF54534">
    <property type="entry name" value="FKBP-like"/>
    <property type="match status" value="1"/>
</dbReference>
<dbReference type="PROSITE" id="PS50198">
    <property type="entry name" value="PPIC_PPIASE_2"/>
    <property type="match status" value="1"/>
</dbReference>
<comment type="function">
    <text evidence="1">PPIases accelerate the folding of proteins. It catalyzes the cis-trans isomerization of proline imidic peptide bonds in oligopeptides (By similarity).</text>
</comment>
<comment type="catalytic activity">
    <reaction>
        <text>[protein]-peptidylproline (omega=180) = [protein]-peptidylproline (omega=0)</text>
        <dbReference type="Rhea" id="RHEA:16237"/>
        <dbReference type="Rhea" id="RHEA-COMP:10747"/>
        <dbReference type="Rhea" id="RHEA-COMP:10748"/>
        <dbReference type="ChEBI" id="CHEBI:83833"/>
        <dbReference type="ChEBI" id="CHEBI:83834"/>
        <dbReference type="EC" id="5.2.1.8"/>
    </reaction>
</comment>
<comment type="similarity">
    <text evidence="4">Belongs to the PpiC/parvulin rotamase family. PIN4 subfamily.</text>
</comment>
<comment type="sequence caution" evidence="4">
    <conflict type="erroneous gene model prediction">
        <sequence resource="EMBL-CDS" id="ESU13529"/>
    </conflict>
</comment>
<organism>
    <name type="scientific">Gibberella zeae (strain ATCC MYA-4620 / CBS 123657 / FGSC 9075 / NRRL 31084 / PH-1)</name>
    <name type="common">Wheat head blight fungus</name>
    <name type="synonym">Fusarium graminearum</name>
    <dbReference type="NCBI Taxonomy" id="229533"/>
    <lineage>
        <taxon>Eukaryota</taxon>
        <taxon>Fungi</taxon>
        <taxon>Dikarya</taxon>
        <taxon>Ascomycota</taxon>
        <taxon>Pezizomycotina</taxon>
        <taxon>Sordariomycetes</taxon>
        <taxon>Hypocreomycetidae</taxon>
        <taxon>Hypocreales</taxon>
        <taxon>Nectriaceae</taxon>
        <taxon>Fusarium</taxon>
    </lineage>
</organism>